<organism>
    <name type="scientific">Synechocystis sp. (strain ATCC 27184 / PCC 6803 / Kazusa)</name>
    <dbReference type="NCBI Taxonomy" id="1111708"/>
    <lineage>
        <taxon>Bacteria</taxon>
        <taxon>Bacillati</taxon>
        <taxon>Cyanobacteriota</taxon>
        <taxon>Cyanophyceae</taxon>
        <taxon>Synechococcales</taxon>
        <taxon>Merismopediaceae</taxon>
        <taxon>Synechocystis</taxon>
    </lineage>
</organism>
<comment type="function">
    <text evidence="1">Involved in the catabolism of quinolinic acid (QA).</text>
</comment>
<comment type="catalytic activity">
    <reaction>
        <text>nicotinate beta-D-ribonucleotide + CO2 + diphosphate = quinolinate + 5-phospho-alpha-D-ribose 1-diphosphate + 2 H(+)</text>
        <dbReference type="Rhea" id="RHEA:12733"/>
        <dbReference type="ChEBI" id="CHEBI:15378"/>
        <dbReference type="ChEBI" id="CHEBI:16526"/>
        <dbReference type="ChEBI" id="CHEBI:29959"/>
        <dbReference type="ChEBI" id="CHEBI:33019"/>
        <dbReference type="ChEBI" id="CHEBI:57502"/>
        <dbReference type="ChEBI" id="CHEBI:58017"/>
        <dbReference type="EC" id="2.4.2.19"/>
    </reaction>
</comment>
<comment type="pathway">
    <text>Cofactor biosynthesis; NAD(+) biosynthesis; nicotinate D-ribonucleotide from quinolinate: step 1/1.</text>
</comment>
<comment type="subunit">
    <text evidence="1">Hexamer formed by 3 homodimers.</text>
</comment>
<comment type="similarity">
    <text evidence="2">Belongs to the NadC/ModD family.</text>
</comment>
<name>NADC_SYNY3</name>
<feature type="chain" id="PRO_0000155950" description="Probable nicotinate-nucleotide pyrophosphorylase [carboxylating]">
    <location>
        <begin position="1"/>
        <end position="295"/>
    </location>
</feature>
<feature type="binding site" evidence="1">
    <location>
        <position position="111"/>
    </location>
    <ligand>
        <name>substrate</name>
    </ligand>
</feature>
<feature type="binding site" evidence="1">
    <location>
        <begin position="144"/>
        <end position="146"/>
    </location>
    <ligand>
        <name>substrate</name>
    </ligand>
</feature>
<feature type="binding site" evidence="1">
    <location>
        <position position="168"/>
    </location>
    <ligand>
        <name>substrate</name>
    </ligand>
</feature>
<feature type="binding site" evidence="1">
    <location>
        <position position="178"/>
    </location>
    <ligand>
        <name>substrate</name>
    </ligand>
</feature>
<feature type="binding site" evidence="1">
    <location>
        <position position="208"/>
    </location>
    <ligand>
        <name>substrate</name>
    </ligand>
</feature>
<feature type="binding site" evidence="1">
    <location>
        <position position="229"/>
    </location>
    <ligand>
        <name>substrate</name>
    </ligand>
</feature>
<feature type="binding site" evidence="1">
    <location>
        <begin position="255"/>
        <end position="257"/>
    </location>
    <ligand>
        <name>substrate</name>
    </ligand>
</feature>
<accession>P74301</accession>
<evidence type="ECO:0000250" key="1"/>
<evidence type="ECO:0000305" key="2"/>
<proteinExistence type="inferred from homology"/>
<dbReference type="EC" id="2.4.2.19"/>
<dbReference type="EMBL" id="BA000022">
    <property type="protein sequence ID" value="BAA18395.1"/>
    <property type="molecule type" value="Genomic_DNA"/>
</dbReference>
<dbReference type="PIR" id="S76136">
    <property type="entry name" value="S76136"/>
</dbReference>
<dbReference type="SMR" id="P74301"/>
<dbReference type="FunCoup" id="P74301">
    <property type="interactions" value="342"/>
</dbReference>
<dbReference type="IntAct" id="P74301">
    <property type="interactions" value="1"/>
</dbReference>
<dbReference type="STRING" id="1148.gene:10499271"/>
<dbReference type="PaxDb" id="1148-1653482"/>
<dbReference type="EnsemblBacteria" id="BAA18395">
    <property type="protein sequence ID" value="BAA18395"/>
    <property type="gene ID" value="BAA18395"/>
</dbReference>
<dbReference type="KEGG" id="syn:slr0936"/>
<dbReference type="eggNOG" id="COG0157">
    <property type="taxonomic scope" value="Bacteria"/>
</dbReference>
<dbReference type="InParanoid" id="P74301"/>
<dbReference type="PhylomeDB" id="P74301"/>
<dbReference type="UniPathway" id="UPA00253">
    <property type="reaction ID" value="UER00331"/>
</dbReference>
<dbReference type="Proteomes" id="UP000001425">
    <property type="component" value="Chromosome"/>
</dbReference>
<dbReference type="GO" id="GO:0005737">
    <property type="term" value="C:cytoplasm"/>
    <property type="evidence" value="ECO:0000318"/>
    <property type="project" value="GO_Central"/>
</dbReference>
<dbReference type="GO" id="GO:0004514">
    <property type="term" value="F:nicotinate-nucleotide diphosphorylase (carboxylating) activity"/>
    <property type="evidence" value="ECO:0000318"/>
    <property type="project" value="GO_Central"/>
</dbReference>
<dbReference type="GO" id="GO:0009435">
    <property type="term" value="P:NAD biosynthetic process"/>
    <property type="evidence" value="ECO:0000318"/>
    <property type="project" value="GO_Central"/>
</dbReference>
<dbReference type="GO" id="GO:0034213">
    <property type="term" value="P:quinolinate catabolic process"/>
    <property type="evidence" value="ECO:0000318"/>
    <property type="project" value="GO_Central"/>
</dbReference>
<dbReference type="CDD" id="cd01572">
    <property type="entry name" value="QPRTase"/>
    <property type="match status" value="1"/>
</dbReference>
<dbReference type="FunFam" id="3.90.1170.20:FF:000001">
    <property type="entry name" value="Nicotinate-nucleotide diphosphorylase (Carboxylating)"/>
    <property type="match status" value="1"/>
</dbReference>
<dbReference type="FunFam" id="3.20.20.70:FF:000030">
    <property type="entry name" value="Nicotinate-nucleotide pyrophosphorylase, carboxylating"/>
    <property type="match status" value="1"/>
</dbReference>
<dbReference type="Gene3D" id="3.20.20.70">
    <property type="entry name" value="Aldolase class I"/>
    <property type="match status" value="1"/>
</dbReference>
<dbReference type="Gene3D" id="3.90.1170.20">
    <property type="entry name" value="Quinolinate phosphoribosyl transferase, N-terminal domain"/>
    <property type="match status" value="1"/>
</dbReference>
<dbReference type="InterPro" id="IPR013785">
    <property type="entry name" value="Aldolase_TIM"/>
</dbReference>
<dbReference type="InterPro" id="IPR004393">
    <property type="entry name" value="NadC"/>
</dbReference>
<dbReference type="InterPro" id="IPR027277">
    <property type="entry name" value="NadC/ModD"/>
</dbReference>
<dbReference type="InterPro" id="IPR036068">
    <property type="entry name" value="Nicotinate_pribotase-like_C"/>
</dbReference>
<dbReference type="InterPro" id="IPR037128">
    <property type="entry name" value="Quinolinate_PRibosylTase_N_sf"/>
</dbReference>
<dbReference type="InterPro" id="IPR002638">
    <property type="entry name" value="Quinolinate_PRibosylTrfase_C"/>
</dbReference>
<dbReference type="InterPro" id="IPR022412">
    <property type="entry name" value="Quinolinate_PRibosylTrfase_N"/>
</dbReference>
<dbReference type="NCBIfam" id="TIGR00078">
    <property type="entry name" value="nadC"/>
    <property type="match status" value="1"/>
</dbReference>
<dbReference type="PANTHER" id="PTHR32179">
    <property type="entry name" value="NICOTINATE-NUCLEOTIDE PYROPHOSPHORYLASE [CARBOXYLATING]"/>
    <property type="match status" value="1"/>
</dbReference>
<dbReference type="PANTHER" id="PTHR32179:SF3">
    <property type="entry name" value="NICOTINATE-NUCLEOTIDE PYROPHOSPHORYLASE [CARBOXYLATING]"/>
    <property type="match status" value="1"/>
</dbReference>
<dbReference type="Pfam" id="PF01729">
    <property type="entry name" value="QRPTase_C"/>
    <property type="match status" value="1"/>
</dbReference>
<dbReference type="Pfam" id="PF02749">
    <property type="entry name" value="QRPTase_N"/>
    <property type="match status" value="1"/>
</dbReference>
<dbReference type="PIRSF" id="PIRSF006250">
    <property type="entry name" value="NadC_ModD"/>
    <property type="match status" value="1"/>
</dbReference>
<dbReference type="SUPFAM" id="SSF51690">
    <property type="entry name" value="Nicotinate/Quinolinate PRTase C-terminal domain-like"/>
    <property type="match status" value="1"/>
</dbReference>
<dbReference type="SUPFAM" id="SSF54675">
    <property type="entry name" value="Nicotinate/Quinolinate PRTase N-terminal domain-like"/>
    <property type="match status" value="1"/>
</dbReference>
<protein>
    <recommendedName>
        <fullName>Probable nicotinate-nucleotide pyrophosphorylase [carboxylating]</fullName>
        <ecNumber>2.4.2.19</ecNumber>
    </recommendedName>
    <alternativeName>
        <fullName>Quinolinate phosphoribosyltransferase [decarboxylating]</fullName>
        <shortName>QAPRTase</shortName>
    </alternativeName>
</protein>
<reference key="1">
    <citation type="journal article" date="1996" name="DNA Res.">
        <title>Sequence analysis of the genome of the unicellular cyanobacterium Synechocystis sp. strain PCC6803. II. Sequence determination of the entire genome and assignment of potential protein-coding regions.</title>
        <authorList>
            <person name="Kaneko T."/>
            <person name="Sato S."/>
            <person name="Kotani H."/>
            <person name="Tanaka A."/>
            <person name="Asamizu E."/>
            <person name="Nakamura Y."/>
            <person name="Miyajima N."/>
            <person name="Hirosawa M."/>
            <person name="Sugiura M."/>
            <person name="Sasamoto S."/>
            <person name="Kimura T."/>
            <person name="Hosouchi T."/>
            <person name="Matsuno A."/>
            <person name="Muraki A."/>
            <person name="Nakazaki N."/>
            <person name="Naruo K."/>
            <person name="Okumura S."/>
            <person name="Shimpo S."/>
            <person name="Takeuchi C."/>
            <person name="Wada T."/>
            <person name="Watanabe A."/>
            <person name="Yamada M."/>
            <person name="Yasuda M."/>
            <person name="Tabata S."/>
        </authorList>
    </citation>
    <scope>NUCLEOTIDE SEQUENCE [LARGE SCALE GENOMIC DNA]</scope>
    <source>
        <strain>ATCC 27184 / PCC 6803 / Kazusa</strain>
    </source>
</reference>
<gene>
    <name type="primary">nadC</name>
    <name type="ordered locus">slr0936</name>
</gene>
<sequence>MMRILVTNPAPMTCLPPWIIIDPWLQQWLAEDIGRGDWSTQGLGLQHRGQARWVAKENGVIAGLPMAARIFQLLDPSMEFQVLAGEGQAVTASTVVATMAGNLGSLLTGERVALNLVMGLSGIATMTRQYVQAIADYPTRFVDTRKTTPGLRVLEKYASRLGGAMNHRLGLDDAVMVKDNHIQAAGSITKAVQTLRQNLPYPLAIEVETSNLEEVQEAIATQVEIIMLDNMGTDTMATAVKLIRQANPLIRIEASGNVTLANLTAIASTGVDFISSSAPITRSPWLDLSMQIVRN</sequence>
<keyword id="KW-0328">Glycosyltransferase</keyword>
<keyword id="KW-0662">Pyridine nucleotide biosynthesis</keyword>
<keyword id="KW-1185">Reference proteome</keyword>
<keyword id="KW-0808">Transferase</keyword>